<protein>
    <recommendedName>
        <fullName evidence="1">Acetylglutamate kinase</fullName>
        <ecNumber evidence="1">2.7.2.8</ecNumber>
    </recommendedName>
    <alternativeName>
        <fullName evidence="1">N-acetyl-L-glutamate 5-phosphotransferase</fullName>
    </alternativeName>
    <alternativeName>
        <fullName evidence="1">NAG kinase</fullName>
        <shortName evidence="1">NAGK</shortName>
    </alternativeName>
</protein>
<evidence type="ECO:0000255" key="1">
    <source>
        <dbReference type="HAMAP-Rule" id="MF_00082"/>
    </source>
</evidence>
<reference key="1">
    <citation type="journal article" date="2016" name="Genome Announc.">
        <title>Complete genome sequence of Alkaliphilus metalliredigens strain QYMF, an alkaliphilic and metal-reducing bacterium isolated from borax-contaminated leachate ponds.</title>
        <authorList>
            <person name="Hwang C."/>
            <person name="Copeland A."/>
            <person name="Lucas S."/>
            <person name="Lapidus A."/>
            <person name="Barry K."/>
            <person name="Detter J.C."/>
            <person name="Glavina Del Rio T."/>
            <person name="Hammon N."/>
            <person name="Israni S."/>
            <person name="Dalin E."/>
            <person name="Tice H."/>
            <person name="Pitluck S."/>
            <person name="Chertkov O."/>
            <person name="Brettin T."/>
            <person name="Bruce D."/>
            <person name="Han C."/>
            <person name="Schmutz J."/>
            <person name="Larimer F."/>
            <person name="Land M.L."/>
            <person name="Hauser L."/>
            <person name="Kyrpides N."/>
            <person name="Mikhailova N."/>
            <person name="Ye Q."/>
            <person name="Zhou J."/>
            <person name="Richardson P."/>
            <person name="Fields M.W."/>
        </authorList>
    </citation>
    <scope>NUCLEOTIDE SEQUENCE [LARGE SCALE GENOMIC DNA]</scope>
    <source>
        <strain>QYMF</strain>
    </source>
</reference>
<sequence length="316" mass="34334">MNLSPNQKADVLIESLPYIKKFYNEIVVIKYGGSAMVNDELKESIIKDIVLMKYVGMHPVVVHGGGPEITNMLKVFDKESKFVDGLRVTDQATMEITEMVLLGKVCQEIVTRINQNGVRSIGICGKDGSMIKTVPKDPELGLVGGITSIDTDLIKTIIEKGYIPVISPIGCGPAGESHNINADEVAGKLAAALGAKKLMLITDVAGVLRDQHDEASLISDIKTNEIEEYIETGVIKGGMIPKISCCFDAVANGVERAHIIDGRKSHSMLLEIFTDQGVGTMITHGGDQNGNSKNNKQWKSIFNEHLWENAYSLPGR</sequence>
<feature type="chain" id="PRO_1000057536" description="Acetylglutamate kinase">
    <location>
        <begin position="1"/>
        <end position="316"/>
    </location>
</feature>
<feature type="binding site" evidence="1">
    <location>
        <begin position="65"/>
        <end position="66"/>
    </location>
    <ligand>
        <name>substrate</name>
    </ligand>
</feature>
<feature type="binding site" evidence="1">
    <location>
        <position position="87"/>
    </location>
    <ligand>
        <name>substrate</name>
    </ligand>
</feature>
<feature type="binding site" evidence="1">
    <location>
        <position position="179"/>
    </location>
    <ligand>
        <name>substrate</name>
    </ligand>
</feature>
<feature type="site" description="Transition state stabilizer" evidence="1">
    <location>
        <position position="30"/>
    </location>
</feature>
<feature type="site" description="Transition state stabilizer" evidence="1">
    <location>
        <position position="242"/>
    </location>
</feature>
<proteinExistence type="inferred from homology"/>
<comment type="function">
    <text evidence="1">Catalyzes the ATP-dependent phosphorylation of N-acetyl-L-glutamate.</text>
</comment>
<comment type="catalytic activity">
    <reaction evidence="1">
        <text>N-acetyl-L-glutamate + ATP = N-acetyl-L-glutamyl 5-phosphate + ADP</text>
        <dbReference type="Rhea" id="RHEA:14629"/>
        <dbReference type="ChEBI" id="CHEBI:30616"/>
        <dbReference type="ChEBI" id="CHEBI:44337"/>
        <dbReference type="ChEBI" id="CHEBI:57936"/>
        <dbReference type="ChEBI" id="CHEBI:456216"/>
        <dbReference type="EC" id="2.7.2.8"/>
    </reaction>
</comment>
<comment type="pathway">
    <text evidence="1">Amino-acid biosynthesis; L-arginine biosynthesis; N(2)-acetyl-L-ornithine from L-glutamate: step 2/4.</text>
</comment>
<comment type="subcellular location">
    <subcellularLocation>
        <location evidence="1">Cytoplasm</location>
    </subcellularLocation>
</comment>
<comment type="similarity">
    <text evidence="1">Belongs to the acetylglutamate kinase family. ArgB subfamily.</text>
</comment>
<dbReference type="EC" id="2.7.2.8" evidence="1"/>
<dbReference type="EMBL" id="CP000724">
    <property type="protein sequence ID" value="ABR49509.1"/>
    <property type="molecule type" value="Genomic_DNA"/>
</dbReference>
<dbReference type="RefSeq" id="WP_012064472.1">
    <property type="nucleotide sequence ID" value="NC_009633.1"/>
</dbReference>
<dbReference type="SMR" id="A6TTJ1"/>
<dbReference type="STRING" id="293826.Amet_3381"/>
<dbReference type="KEGG" id="amt:Amet_3381"/>
<dbReference type="eggNOG" id="COG0548">
    <property type="taxonomic scope" value="Bacteria"/>
</dbReference>
<dbReference type="HOGENOM" id="CLU_053680_0_0_9"/>
<dbReference type="OrthoDB" id="9803155at2"/>
<dbReference type="UniPathway" id="UPA00068">
    <property type="reaction ID" value="UER00107"/>
</dbReference>
<dbReference type="Proteomes" id="UP000001572">
    <property type="component" value="Chromosome"/>
</dbReference>
<dbReference type="GO" id="GO:0005737">
    <property type="term" value="C:cytoplasm"/>
    <property type="evidence" value="ECO:0007669"/>
    <property type="project" value="UniProtKB-SubCell"/>
</dbReference>
<dbReference type="GO" id="GO:0003991">
    <property type="term" value="F:acetylglutamate kinase activity"/>
    <property type="evidence" value="ECO:0007669"/>
    <property type="project" value="UniProtKB-UniRule"/>
</dbReference>
<dbReference type="GO" id="GO:0005524">
    <property type="term" value="F:ATP binding"/>
    <property type="evidence" value="ECO:0007669"/>
    <property type="project" value="UniProtKB-UniRule"/>
</dbReference>
<dbReference type="GO" id="GO:0042450">
    <property type="term" value="P:arginine biosynthetic process via ornithine"/>
    <property type="evidence" value="ECO:0007669"/>
    <property type="project" value="UniProtKB-UniRule"/>
</dbReference>
<dbReference type="GO" id="GO:0006526">
    <property type="term" value="P:L-arginine biosynthetic process"/>
    <property type="evidence" value="ECO:0007669"/>
    <property type="project" value="UniProtKB-UniPathway"/>
</dbReference>
<dbReference type="CDD" id="cd04250">
    <property type="entry name" value="AAK_NAGK-C"/>
    <property type="match status" value="1"/>
</dbReference>
<dbReference type="FunFam" id="3.40.1160.10:FF:000004">
    <property type="entry name" value="Acetylglutamate kinase"/>
    <property type="match status" value="1"/>
</dbReference>
<dbReference type="Gene3D" id="3.40.1160.10">
    <property type="entry name" value="Acetylglutamate kinase-like"/>
    <property type="match status" value="1"/>
</dbReference>
<dbReference type="HAMAP" id="MF_00082">
    <property type="entry name" value="ArgB"/>
    <property type="match status" value="1"/>
</dbReference>
<dbReference type="InterPro" id="IPR036393">
    <property type="entry name" value="AceGlu_kinase-like_sf"/>
</dbReference>
<dbReference type="InterPro" id="IPR004662">
    <property type="entry name" value="AcgluKinase_fam"/>
</dbReference>
<dbReference type="InterPro" id="IPR037528">
    <property type="entry name" value="ArgB"/>
</dbReference>
<dbReference type="InterPro" id="IPR001048">
    <property type="entry name" value="Asp/Glu/Uridylate_kinase"/>
</dbReference>
<dbReference type="InterPro" id="IPR001057">
    <property type="entry name" value="Glu/AcGlu_kinase"/>
</dbReference>
<dbReference type="InterPro" id="IPR041727">
    <property type="entry name" value="NAGK-C"/>
</dbReference>
<dbReference type="NCBIfam" id="TIGR00761">
    <property type="entry name" value="argB"/>
    <property type="match status" value="1"/>
</dbReference>
<dbReference type="PANTHER" id="PTHR23342">
    <property type="entry name" value="N-ACETYLGLUTAMATE SYNTHASE"/>
    <property type="match status" value="1"/>
</dbReference>
<dbReference type="PANTHER" id="PTHR23342:SF0">
    <property type="entry name" value="N-ACETYLGLUTAMATE SYNTHASE, MITOCHONDRIAL"/>
    <property type="match status" value="1"/>
</dbReference>
<dbReference type="Pfam" id="PF00696">
    <property type="entry name" value="AA_kinase"/>
    <property type="match status" value="1"/>
</dbReference>
<dbReference type="PIRSF" id="PIRSF000728">
    <property type="entry name" value="NAGK"/>
    <property type="match status" value="1"/>
</dbReference>
<dbReference type="PRINTS" id="PR00474">
    <property type="entry name" value="GLU5KINASE"/>
</dbReference>
<dbReference type="SUPFAM" id="SSF53633">
    <property type="entry name" value="Carbamate kinase-like"/>
    <property type="match status" value="1"/>
</dbReference>
<name>ARGB_ALKMQ</name>
<keyword id="KW-0028">Amino-acid biosynthesis</keyword>
<keyword id="KW-0055">Arginine biosynthesis</keyword>
<keyword id="KW-0067">ATP-binding</keyword>
<keyword id="KW-0963">Cytoplasm</keyword>
<keyword id="KW-0418">Kinase</keyword>
<keyword id="KW-0547">Nucleotide-binding</keyword>
<keyword id="KW-1185">Reference proteome</keyword>
<keyword id="KW-0808">Transferase</keyword>
<organism>
    <name type="scientific">Alkaliphilus metalliredigens (strain QYMF)</name>
    <dbReference type="NCBI Taxonomy" id="293826"/>
    <lineage>
        <taxon>Bacteria</taxon>
        <taxon>Bacillati</taxon>
        <taxon>Bacillota</taxon>
        <taxon>Clostridia</taxon>
        <taxon>Peptostreptococcales</taxon>
        <taxon>Natronincolaceae</taxon>
        <taxon>Alkaliphilus</taxon>
    </lineage>
</organism>
<accession>A6TTJ1</accession>
<gene>
    <name evidence="1" type="primary">argB</name>
    <name type="ordered locus">Amet_3381</name>
</gene>